<keyword id="KW-1185">Reference proteome</keyword>
<keyword id="KW-0687">Ribonucleoprotein</keyword>
<keyword id="KW-0689">Ribosomal protein</keyword>
<keyword id="KW-0694">RNA-binding</keyword>
<keyword id="KW-0699">rRNA-binding</keyword>
<keyword id="KW-0820">tRNA-binding</keyword>
<accession>Q53539</accession>
<accession>A0A1R3XW24</accession>
<accession>X2BFT8</accession>
<proteinExistence type="inferred from homology"/>
<comment type="function">
    <text evidence="1">One of the primary rRNA binding proteins, it binds directly to 16S rRNA where it nucleates assembly of the head domain of the 30S subunit. Is located at the subunit interface close to the decoding center, probably blocks exit of the E-site tRNA.</text>
</comment>
<comment type="subunit">
    <text evidence="1">Part of the 30S ribosomal subunit. Contacts proteins S9 and S11.</text>
</comment>
<comment type="similarity">
    <text evidence="1">Belongs to the universal ribosomal protein uS7 family.</text>
</comment>
<sequence length="156" mass="17600">MPRKGPAPKRPLVNDPVYGSQLVTQLVNKVLLKGKKSLAERIVYGALEQARDKTGTDPVITLKRALDNVKPALEVRSRRVGGATYQVPVEVRPDRSTTLALRWLVGYSRQRREKTMIERLANEILDASNGLGASVKRREDTHKMAEANRAFAHYRW</sequence>
<gene>
    <name evidence="1" type="primary">rpsG</name>
    <name type="ordered locus">BQ2027_MB0702</name>
</gene>
<dbReference type="EMBL" id="S79283">
    <property type="protein sequence ID" value="AAB35202.2"/>
    <property type="molecule type" value="Genomic_DNA"/>
</dbReference>
<dbReference type="EMBL" id="LT708304">
    <property type="protein sequence ID" value="SIT99300.1"/>
    <property type="molecule type" value="Genomic_DNA"/>
</dbReference>
<dbReference type="RefSeq" id="NP_854360.1">
    <property type="nucleotide sequence ID" value="NC_002945.3"/>
</dbReference>
<dbReference type="RefSeq" id="WP_003403456.1">
    <property type="nucleotide sequence ID" value="NC_002945.4"/>
</dbReference>
<dbReference type="SMR" id="Q53539"/>
<dbReference type="GeneID" id="45424645"/>
<dbReference type="KEGG" id="mbo:BQ2027_MB0702"/>
<dbReference type="PATRIC" id="fig|233413.5.peg.765"/>
<dbReference type="Proteomes" id="UP000001419">
    <property type="component" value="Chromosome"/>
</dbReference>
<dbReference type="GO" id="GO:0015935">
    <property type="term" value="C:small ribosomal subunit"/>
    <property type="evidence" value="ECO:0007669"/>
    <property type="project" value="InterPro"/>
</dbReference>
<dbReference type="GO" id="GO:0019843">
    <property type="term" value="F:rRNA binding"/>
    <property type="evidence" value="ECO:0007669"/>
    <property type="project" value="UniProtKB-UniRule"/>
</dbReference>
<dbReference type="GO" id="GO:0003735">
    <property type="term" value="F:structural constituent of ribosome"/>
    <property type="evidence" value="ECO:0007669"/>
    <property type="project" value="InterPro"/>
</dbReference>
<dbReference type="GO" id="GO:0000049">
    <property type="term" value="F:tRNA binding"/>
    <property type="evidence" value="ECO:0007669"/>
    <property type="project" value="UniProtKB-UniRule"/>
</dbReference>
<dbReference type="GO" id="GO:0006412">
    <property type="term" value="P:translation"/>
    <property type="evidence" value="ECO:0007669"/>
    <property type="project" value="UniProtKB-UniRule"/>
</dbReference>
<dbReference type="CDD" id="cd14869">
    <property type="entry name" value="uS7_Bacteria"/>
    <property type="match status" value="1"/>
</dbReference>
<dbReference type="FunFam" id="1.10.455.10:FF:000001">
    <property type="entry name" value="30S ribosomal protein S7"/>
    <property type="match status" value="1"/>
</dbReference>
<dbReference type="Gene3D" id="1.10.455.10">
    <property type="entry name" value="Ribosomal protein S7 domain"/>
    <property type="match status" value="1"/>
</dbReference>
<dbReference type="HAMAP" id="MF_00480_B">
    <property type="entry name" value="Ribosomal_uS7_B"/>
    <property type="match status" value="1"/>
</dbReference>
<dbReference type="InterPro" id="IPR000235">
    <property type="entry name" value="Ribosomal_uS7"/>
</dbReference>
<dbReference type="InterPro" id="IPR005717">
    <property type="entry name" value="Ribosomal_uS7_bac/org-type"/>
</dbReference>
<dbReference type="InterPro" id="IPR020606">
    <property type="entry name" value="Ribosomal_uS7_CS"/>
</dbReference>
<dbReference type="InterPro" id="IPR023798">
    <property type="entry name" value="Ribosomal_uS7_dom"/>
</dbReference>
<dbReference type="InterPro" id="IPR036823">
    <property type="entry name" value="Ribosomal_uS7_dom_sf"/>
</dbReference>
<dbReference type="NCBIfam" id="TIGR01029">
    <property type="entry name" value="rpsG_bact"/>
    <property type="match status" value="1"/>
</dbReference>
<dbReference type="PANTHER" id="PTHR11205">
    <property type="entry name" value="RIBOSOMAL PROTEIN S7"/>
    <property type="match status" value="1"/>
</dbReference>
<dbReference type="Pfam" id="PF00177">
    <property type="entry name" value="Ribosomal_S7"/>
    <property type="match status" value="1"/>
</dbReference>
<dbReference type="PIRSF" id="PIRSF002122">
    <property type="entry name" value="RPS7p_RPS7a_RPS5e_RPS7o"/>
    <property type="match status" value="1"/>
</dbReference>
<dbReference type="SUPFAM" id="SSF47973">
    <property type="entry name" value="Ribosomal protein S7"/>
    <property type="match status" value="1"/>
</dbReference>
<dbReference type="PROSITE" id="PS00052">
    <property type="entry name" value="RIBOSOMAL_S7"/>
    <property type="match status" value="1"/>
</dbReference>
<name>RS7_MYCBO</name>
<organism>
    <name type="scientific">Mycobacterium bovis (strain ATCC BAA-935 / AF2122/97)</name>
    <dbReference type="NCBI Taxonomy" id="233413"/>
    <lineage>
        <taxon>Bacteria</taxon>
        <taxon>Bacillati</taxon>
        <taxon>Actinomycetota</taxon>
        <taxon>Actinomycetes</taxon>
        <taxon>Mycobacteriales</taxon>
        <taxon>Mycobacteriaceae</taxon>
        <taxon>Mycobacterium</taxon>
        <taxon>Mycobacterium tuberculosis complex</taxon>
    </lineage>
</organism>
<evidence type="ECO:0000255" key="1">
    <source>
        <dbReference type="HAMAP-Rule" id="MF_00480"/>
    </source>
</evidence>
<evidence type="ECO:0000305" key="2"/>
<protein>
    <recommendedName>
        <fullName evidence="1">Small ribosomal subunit protein uS7</fullName>
    </recommendedName>
    <alternativeName>
        <fullName evidence="2">30S ribosomal protein S7</fullName>
    </alternativeName>
</protein>
<reference key="1">
    <citation type="journal article" date="1995" name="Biochem. Mol. Biol. Int.">
        <title>Cloning and nucleotide sequence of the gene cluster encoding ribosomal proteins S12 and S7 from Mycobacterium bovis BCG.</title>
        <authorList>
            <person name="Iwanaga S."/>
            <person name="Ohara N."/>
            <person name="Kariu T."/>
            <person name="Kimura M."/>
            <person name="Yamasaki N."/>
            <person name="Yamada T."/>
        </authorList>
    </citation>
    <scope>NUCLEOTIDE SEQUENCE [GENOMIC DNA]</scope>
    <source>
        <strain>BCG</strain>
    </source>
</reference>
<reference key="2">
    <citation type="journal article" date="2003" name="Proc. Natl. Acad. Sci. U.S.A.">
        <title>The complete genome sequence of Mycobacterium bovis.</title>
        <authorList>
            <person name="Garnier T."/>
            <person name="Eiglmeier K."/>
            <person name="Camus J.-C."/>
            <person name="Medina N."/>
            <person name="Mansoor H."/>
            <person name="Pryor M."/>
            <person name="Duthoy S."/>
            <person name="Grondin S."/>
            <person name="Lacroix C."/>
            <person name="Monsempe C."/>
            <person name="Simon S."/>
            <person name="Harris B."/>
            <person name="Atkin R."/>
            <person name="Doggett J."/>
            <person name="Mayes R."/>
            <person name="Keating L."/>
            <person name="Wheeler P.R."/>
            <person name="Parkhill J."/>
            <person name="Barrell B.G."/>
            <person name="Cole S.T."/>
            <person name="Gordon S.V."/>
            <person name="Hewinson R.G."/>
        </authorList>
    </citation>
    <scope>NUCLEOTIDE SEQUENCE [LARGE SCALE GENOMIC DNA]</scope>
    <source>
        <strain>ATCC BAA-935 / AF2122/97</strain>
    </source>
</reference>
<reference key="3">
    <citation type="journal article" date="2017" name="Genome Announc.">
        <title>Updated reference genome sequence and annotation of Mycobacterium bovis AF2122/97.</title>
        <authorList>
            <person name="Malone K.M."/>
            <person name="Farrell D."/>
            <person name="Stuber T.P."/>
            <person name="Schubert O.T."/>
            <person name="Aebersold R."/>
            <person name="Robbe-Austerman S."/>
            <person name="Gordon S.V."/>
        </authorList>
    </citation>
    <scope>NUCLEOTIDE SEQUENCE [LARGE SCALE GENOMIC DNA]</scope>
    <scope>GENOME REANNOTATION</scope>
    <source>
        <strain>ATCC BAA-935 / AF2122/97</strain>
    </source>
</reference>
<feature type="chain" id="PRO_0000124293" description="Small ribosomal subunit protein uS7">
    <location>
        <begin position="1"/>
        <end position="156"/>
    </location>
</feature>
<feature type="sequence conflict" description="In Ref. 1; AAB35202." evidence="2" ref="1">
    <original>ND</original>
    <variation>QR</variation>
    <location>
        <begin position="14"/>
        <end position="15"/>
    </location>
</feature>
<feature type="sequence conflict" description="In Ref. 1; AAB35202." evidence="2" ref="1">
    <original>G</original>
    <variation>D</variation>
    <location>
        <position position="19"/>
    </location>
</feature>
<feature type="sequence conflict" description="In Ref. 1; AAB35202." evidence="2" ref="1">
    <original>R</original>
    <variation>L</variation>
    <location>
        <position position="78"/>
    </location>
</feature>
<feature type="sequence conflict" description="In Ref. 1; AAB35202." evidence="2" ref="1">
    <original>R</original>
    <variation>L</variation>
    <location>
        <position position="109"/>
    </location>
</feature>